<proteinExistence type="evidence at protein level"/>
<sequence length="263" mass="29598">MARGPKKHLKRVAAPKHWMLDKLTGVFAPRPSTGPHKLRECLPLIIFLRNRLKYALTGDEVKKICMQRFIKIDGKVRTDITYPAGFMDVISIDKTGENFRLIYDTKGRFAVHRITPEEAKYKLCKVRKIFVGTKGIPHLVTHDARTIRYPDPLIKVNDTIQIDLETGKITDFIKFDTGNLCMVTGGANLGRIGVITNRERHPGSFDVVHVKDANGNSFATRLSNIFVIGKGNKPWISLPRGKGIRLTIAEERDKRLAAKQSSG</sequence>
<comment type="function">
    <text evidence="1">Component of the small ribosomal subunit. The ribosome is a large ribonucleoprotein complex responsible for the synthesis of proteins in the cell. Part of the small subunit (SSU) processome, first precursor of the small eukaryotic ribosomal subunit. During the assembly of the SSU processome in the nucleolus, many ribosome biogenesis factors, an RNA chaperone and ribosomal proteins associate with the nascent pre-rRNA and work in concert to generate RNA folding, modifications, rearrangements and cleavage as well as targeted degradation of pre-ribosomal RNA by the RNA exosome.</text>
</comment>
<comment type="subunit">
    <text evidence="1">Component of the small ribosomal subunit. Part of the small subunit (SSU) processome, composed of more than 70 proteins and the RNA chaperone small nucleolar RNA (snoRNA) U3. Identified in a IGF2BP1-dependent mRNP granule complex containing untranslated mRNAs.</text>
</comment>
<comment type="subcellular location">
    <subcellularLocation>
        <location evidence="1">Cytoplasm</location>
    </subcellularLocation>
    <subcellularLocation>
        <location evidence="1">Nucleus</location>
        <location evidence="1">Nucleolus</location>
    </subcellularLocation>
    <text evidence="1">Localized in cytoplasmic mRNP granules containing untranslated mRNAs.</text>
</comment>
<comment type="similarity">
    <text evidence="3">Belongs to the eukaryotic ribosomal protein eS4 family.</text>
</comment>
<organism>
    <name type="scientific">Rattus norvegicus</name>
    <name type="common">Rat</name>
    <dbReference type="NCBI Taxonomy" id="10116"/>
    <lineage>
        <taxon>Eukaryota</taxon>
        <taxon>Metazoa</taxon>
        <taxon>Chordata</taxon>
        <taxon>Craniata</taxon>
        <taxon>Vertebrata</taxon>
        <taxon>Euteleostomi</taxon>
        <taxon>Mammalia</taxon>
        <taxon>Eutheria</taxon>
        <taxon>Euarchontoglires</taxon>
        <taxon>Glires</taxon>
        <taxon>Rodentia</taxon>
        <taxon>Myomorpha</taxon>
        <taxon>Muroidea</taxon>
        <taxon>Muridae</taxon>
        <taxon>Murinae</taxon>
        <taxon>Rattus</taxon>
    </lineage>
</organism>
<gene>
    <name type="primary">Rps4x</name>
    <name type="synonym">Rps4</name>
</gene>
<dbReference type="EMBL" id="X14210">
    <property type="protein sequence ID" value="CAA32427.1"/>
    <property type="molecule type" value="mRNA"/>
</dbReference>
<dbReference type="EMBL" id="BC086560">
    <property type="protein sequence ID" value="AAH86560.1"/>
    <property type="molecule type" value="mRNA"/>
</dbReference>
<dbReference type="PIR" id="S14080">
    <property type="entry name" value="R3RT4"/>
</dbReference>
<dbReference type="RefSeq" id="NP_001007601.1">
    <property type="nucleotide sequence ID" value="NM_001007600.2"/>
</dbReference>
<dbReference type="PDB" id="7QGG">
    <property type="method" value="EM"/>
    <property type="resolution" value="2.86 A"/>
    <property type="chains" value="SE=1-263"/>
</dbReference>
<dbReference type="PDBsum" id="7QGG"/>
<dbReference type="EMDB" id="EMD-13954"/>
<dbReference type="SMR" id="P62703"/>
<dbReference type="BioGRID" id="1201774">
    <property type="interactions" value="7"/>
</dbReference>
<dbReference type="FunCoup" id="P62703">
    <property type="interactions" value="2472"/>
</dbReference>
<dbReference type="IntAct" id="P62703">
    <property type="interactions" value="12"/>
</dbReference>
<dbReference type="MINT" id="P62703"/>
<dbReference type="STRING" id="10116.ENSRNOP00000043988"/>
<dbReference type="iPTMnet" id="P62703"/>
<dbReference type="PhosphoSitePlus" id="P62703"/>
<dbReference type="jPOST" id="P62703"/>
<dbReference type="PaxDb" id="10116-ENSRNOP00000043988"/>
<dbReference type="Ensembl" id="ENSRNOT00000051149.3">
    <property type="protein sequence ID" value="ENSRNOP00000043988.3"/>
    <property type="gene ID" value="ENSRNOG00000029574.3"/>
</dbReference>
<dbReference type="GeneID" id="100362640"/>
<dbReference type="KEGG" id="rno:100362640"/>
<dbReference type="UCSC" id="RGD:3600">
    <property type="organism name" value="rat"/>
</dbReference>
<dbReference type="AGR" id="RGD:2324318"/>
<dbReference type="CTD" id="6191"/>
<dbReference type="RGD" id="2324318">
    <property type="gene designation" value="Rps4x"/>
</dbReference>
<dbReference type="VEuPathDB" id="HostDB:ENSRNOG00000003201"/>
<dbReference type="eggNOG" id="KOG0378">
    <property type="taxonomic scope" value="Eukaryota"/>
</dbReference>
<dbReference type="GeneTree" id="ENSGT00390000005569"/>
<dbReference type="HOGENOM" id="CLU_060400_1_0_1"/>
<dbReference type="InParanoid" id="P62703"/>
<dbReference type="OMA" id="KANDTHK"/>
<dbReference type="OrthoDB" id="3952at9989"/>
<dbReference type="PhylomeDB" id="P62703"/>
<dbReference type="TreeFam" id="TF300612"/>
<dbReference type="Reactome" id="R-RNO-156827">
    <property type="pathway name" value="L13a-mediated translational silencing of Ceruloplasmin expression"/>
</dbReference>
<dbReference type="Reactome" id="R-RNO-1799339">
    <property type="pathway name" value="SRP-dependent cotranslational protein targeting to membrane"/>
</dbReference>
<dbReference type="Reactome" id="R-RNO-6791226">
    <property type="pathway name" value="Major pathway of rRNA processing in the nucleolus and cytosol"/>
</dbReference>
<dbReference type="Reactome" id="R-RNO-72649">
    <property type="pathway name" value="Translation initiation complex formation"/>
</dbReference>
<dbReference type="Reactome" id="R-RNO-72689">
    <property type="pathway name" value="Formation of a pool of free 40S subunits"/>
</dbReference>
<dbReference type="Reactome" id="R-RNO-72695">
    <property type="pathway name" value="Formation of the ternary complex, and subsequently, the 43S complex"/>
</dbReference>
<dbReference type="Reactome" id="R-RNO-72702">
    <property type="pathway name" value="Ribosomal scanning and start codon recognition"/>
</dbReference>
<dbReference type="Reactome" id="R-RNO-72706">
    <property type="pathway name" value="GTP hydrolysis and joining of the 60S ribosomal subunit"/>
</dbReference>
<dbReference type="Reactome" id="R-RNO-975956">
    <property type="pathway name" value="Nonsense Mediated Decay (NMD) independent of the Exon Junction Complex (EJC)"/>
</dbReference>
<dbReference type="Reactome" id="R-RNO-975957">
    <property type="pathway name" value="Nonsense Mediated Decay (NMD) enhanced by the Exon Junction Complex (EJC)"/>
</dbReference>
<dbReference type="PRO" id="PR:P62703"/>
<dbReference type="Proteomes" id="UP000002494">
    <property type="component" value="Chromosome 4"/>
</dbReference>
<dbReference type="Bgee" id="ENSRNOG00000003201">
    <property type="expression patterns" value="Expressed in thymus and 19 other cell types or tissues"/>
</dbReference>
<dbReference type="ExpressionAtlas" id="P62703">
    <property type="expression patterns" value="baseline and differential"/>
</dbReference>
<dbReference type="GO" id="GO:0036464">
    <property type="term" value="C:cytoplasmic ribonucleoprotein granule"/>
    <property type="evidence" value="ECO:0000266"/>
    <property type="project" value="RGD"/>
</dbReference>
<dbReference type="GO" id="GO:0022626">
    <property type="term" value="C:cytosolic ribosome"/>
    <property type="evidence" value="ECO:0000266"/>
    <property type="project" value="RGD"/>
</dbReference>
<dbReference type="GO" id="GO:0022627">
    <property type="term" value="C:cytosolic small ribosomal subunit"/>
    <property type="evidence" value="ECO:0000266"/>
    <property type="project" value="RGD"/>
</dbReference>
<dbReference type="GO" id="GO:0005730">
    <property type="term" value="C:nucleolus"/>
    <property type="evidence" value="ECO:0007669"/>
    <property type="project" value="UniProtKB-SubCell"/>
</dbReference>
<dbReference type="GO" id="GO:1990904">
    <property type="term" value="C:ribonucleoprotein complex"/>
    <property type="evidence" value="ECO:0000250"/>
    <property type="project" value="UniProtKB"/>
</dbReference>
<dbReference type="GO" id="GO:0005840">
    <property type="term" value="C:ribosome"/>
    <property type="evidence" value="ECO:0000314"/>
    <property type="project" value="RGD"/>
</dbReference>
<dbReference type="GO" id="GO:0015935">
    <property type="term" value="C:small ribosomal subunit"/>
    <property type="evidence" value="ECO:0000266"/>
    <property type="project" value="RGD"/>
</dbReference>
<dbReference type="GO" id="GO:0032040">
    <property type="term" value="C:small-subunit processome"/>
    <property type="evidence" value="ECO:0000250"/>
    <property type="project" value="UniProtKB"/>
</dbReference>
<dbReference type="GO" id="GO:0045202">
    <property type="term" value="C:synapse"/>
    <property type="evidence" value="ECO:0000266"/>
    <property type="project" value="RGD"/>
</dbReference>
<dbReference type="GO" id="GO:0003723">
    <property type="term" value="F:RNA binding"/>
    <property type="evidence" value="ECO:0000318"/>
    <property type="project" value="GO_Central"/>
</dbReference>
<dbReference type="GO" id="GO:0019843">
    <property type="term" value="F:rRNA binding"/>
    <property type="evidence" value="ECO:0007669"/>
    <property type="project" value="UniProtKB-KW"/>
</dbReference>
<dbReference type="GO" id="GO:0003735">
    <property type="term" value="F:structural constituent of ribosome"/>
    <property type="evidence" value="ECO:0000266"/>
    <property type="project" value="RGD"/>
</dbReference>
<dbReference type="GO" id="GO:0008284">
    <property type="term" value="P:positive regulation of cell population proliferation"/>
    <property type="evidence" value="ECO:0000266"/>
    <property type="project" value="RGD"/>
</dbReference>
<dbReference type="GO" id="GO:0045727">
    <property type="term" value="P:positive regulation of translation"/>
    <property type="evidence" value="ECO:0000266"/>
    <property type="project" value="RGD"/>
</dbReference>
<dbReference type="GO" id="GO:0045471">
    <property type="term" value="P:response to ethanol"/>
    <property type="evidence" value="ECO:0000270"/>
    <property type="project" value="RGD"/>
</dbReference>
<dbReference type="GO" id="GO:0042274">
    <property type="term" value="P:ribosomal small subunit biogenesis"/>
    <property type="evidence" value="ECO:0000250"/>
    <property type="project" value="UniProtKB"/>
</dbReference>
<dbReference type="GO" id="GO:0006412">
    <property type="term" value="P:translation"/>
    <property type="evidence" value="ECO:0000266"/>
    <property type="project" value="RGD"/>
</dbReference>
<dbReference type="CDD" id="cd06087">
    <property type="entry name" value="KOW_RPS4"/>
    <property type="match status" value="1"/>
</dbReference>
<dbReference type="CDD" id="cd00165">
    <property type="entry name" value="S4"/>
    <property type="match status" value="1"/>
</dbReference>
<dbReference type="FunFam" id="2.30.30.30:FF:000005">
    <property type="entry name" value="40S ribosomal protein S4"/>
    <property type="match status" value="1"/>
</dbReference>
<dbReference type="FunFam" id="2.40.50.740:FF:000001">
    <property type="entry name" value="40S ribosomal protein S4"/>
    <property type="match status" value="1"/>
</dbReference>
<dbReference type="FunFam" id="3.10.290.10:FF:000051">
    <property type="entry name" value="40S ribosomal protein S4, X isoform"/>
    <property type="match status" value="1"/>
</dbReference>
<dbReference type="Gene3D" id="2.30.30.30">
    <property type="match status" value="1"/>
</dbReference>
<dbReference type="Gene3D" id="2.40.50.740">
    <property type="match status" value="1"/>
</dbReference>
<dbReference type="Gene3D" id="3.10.290.10">
    <property type="entry name" value="RNA-binding S4 domain"/>
    <property type="match status" value="1"/>
</dbReference>
<dbReference type="HAMAP" id="MF_00485">
    <property type="entry name" value="Ribosomal_eS4"/>
    <property type="match status" value="1"/>
</dbReference>
<dbReference type="InterPro" id="IPR005824">
    <property type="entry name" value="KOW"/>
</dbReference>
<dbReference type="InterPro" id="IPR014722">
    <property type="entry name" value="Rib_uL2_dom2"/>
</dbReference>
<dbReference type="InterPro" id="IPR000876">
    <property type="entry name" value="Ribosomal_eS4"/>
</dbReference>
<dbReference type="InterPro" id="IPR032277">
    <property type="entry name" value="Ribosomal_eS4_C"/>
</dbReference>
<dbReference type="InterPro" id="IPR013845">
    <property type="entry name" value="Ribosomal_eS4_central_region"/>
</dbReference>
<dbReference type="InterPro" id="IPR038237">
    <property type="entry name" value="Ribosomal_eS4_central_sf"/>
</dbReference>
<dbReference type="InterPro" id="IPR041982">
    <property type="entry name" value="Ribosomal_eS4_KOW"/>
</dbReference>
<dbReference type="InterPro" id="IPR013843">
    <property type="entry name" value="Ribosomal_eS4_N"/>
</dbReference>
<dbReference type="InterPro" id="IPR018199">
    <property type="entry name" value="Ribosomal_eS4_N_CS"/>
</dbReference>
<dbReference type="InterPro" id="IPR002942">
    <property type="entry name" value="S4_RNA-bd"/>
</dbReference>
<dbReference type="InterPro" id="IPR036986">
    <property type="entry name" value="S4_RNA-bd_sf"/>
</dbReference>
<dbReference type="PANTHER" id="PTHR11581">
    <property type="entry name" value="30S/40S RIBOSOMAL PROTEIN S4"/>
    <property type="match status" value="1"/>
</dbReference>
<dbReference type="PANTHER" id="PTHR11581:SF0">
    <property type="entry name" value="SMALL RIBOSOMAL SUBUNIT PROTEIN ES4"/>
    <property type="match status" value="1"/>
</dbReference>
<dbReference type="Pfam" id="PF16121">
    <property type="entry name" value="40S_S4_C"/>
    <property type="match status" value="1"/>
</dbReference>
<dbReference type="Pfam" id="PF00467">
    <property type="entry name" value="KOW"/>
    <property type="match status" value="1"/>
</dbReference>
<dbReference type="Pfam" id="PF00900">
    <property type="entry name" value="Ribosomal_S4e"/>
    <property type="match status" value="1"/>
</dbReference>
<dbReference type="Pfam" id="PF08071">
    <property type="entry name" value="RS4NT"/>
    <property type="match status" value="1"/>
</dbReference>
<dbReference type="PIRSF" id="PIRSF002116">
    <property type="entry name" value="Ribosomal_S4"/>
    <property type="match status" value="1"/>
</dbReference>
<dbReference type="SMART" id="SM00363">
    <property type="entry name" value="S4"/>
    <property type="match status" value="1"/>
</dbReference>
<dbReference type="PROSITE" id="PS00528">
    <property type="entry name" value="RIBOSOMAL_S4E"/>
    <property type="match status" value="1"/>
</dbReference>
<dbReference type="PROSITE" id="PS50889">
    <property type="entry name" value="S4"/>
    <property type="match status" value="1"/>
</dbReference>
<feature type="initiator methionine" description="Removed" evidence="1">
    <location>
        <position position="1"/>
    </location>
</feature>
<feature type="chain" id="PRO_0000130810" description="Small ribosomal subunit protein eS4">
    <location>
        <begin position="2"/>
        <end position="263"/>
    </location>
</feature>
<feature type="domain" description="S4 RNA-binding">
    <location>
        <begin position="42"/>
        <end position="104"/>
    </location>
</feature>
<feature type="modified residue" description="N6-acetyllysine" evidence="2">
    <location>
        <position position="233"/>
    </location>
</feature>
<feature type="cross-link" description="Glycyl lysine isopeptide (Lys-Gly) (interchain with G-Cter in SUMO2)" evidence="1">
    <location>
        <position position="230"/>
    </location>
</feature>
<keyword id="KW-0002">3D-structure</keyword>
<keyword id="KW-0007">Acetylation</keyword>
<keyword id="KW-0963">Cytoplasm</keyword>
<keyword id="KW-1017">Isopeptide bond</keyword>
<keyword id="KW-0539">Nucleus</keyword>
<keyword id="KW-1185">Reference proteome</keyword>
<keyword id="KW-0687">Ribonucleoprotein</keyword>
<keyword id="KW-0689">Ribosomal protein</keyword>
<keyword id="KW-0694">RNA-binding</keyword>
<keyword id="KW-0699">rRNA-binding</keyword>
<keyword id="KW-0832">Ubl conjugation</keyword>
<evidence type="ECO:0000250" key="1">
    <source>
        <dbReference type="UniProtKB" id="P62701"/>
    </source>
</evidence>
<evidence type="ECO:0000250" key="2">
    <source>
        <dbReference type="UniProtKB" id="P62702"/>
    </source>
</evidence>
<evidence type="ECO:0000305" key="3"/>
<protein>
    <recommendedName>
        <fullName evidence="3">Small ribosomal subunit protein eS4</fullName>
    </recommendedName>
    <alternativeName>
        <fullName>40S ribosomal protein S4, X isoform</fullName>
    </alternativeName>
</protein>
<accession>P62703</accession>
<accession>P12631</accession>
<accession>P12750</accession>
<accession>P27576</accession>
<accession>P55831</accession>
<accession>Q14727</accession>
<name>RS4X_RAT</name>
<reference key="1">
    <citation type="journal article" date="1989" name="Biochim. Biophys. Acta">
        <title>The primary structure of rat ribosomal protein S4.</title>
        <authorList>
            <person name="Devi K.R."/>
            <person name="Chan Y.-L."/>
            <person name="Wool I.G."/>
        </authorList>
    </citation>
    <scope>NUCLEOTIDE SEQUENCE [MRNA]</scope>
    <source>
        <strain>Sprague-Dawley</strain>
        <tissue>Liver</tissue>
    </source>
</reference>
<reference key="2">
    <citation type="journal article" date="1990" name="Biochim. Biophys. Acta">
        <title>The primary structure of rat ribosomal proteins: the amino acid sequences of L27a and L28 and corrections in the sequences of S4 and S12.</title>
        <authorList>
            <person name="Wool I.G."/>
            <person name="Chan Y.-L."/>
            <person name="Paz V."/>
            <person name="Olvera J."/>
        </authorList>
    </citation>
    <scope>SEQUENCE REVISION</scope>
</reference>
<reference key="3">
    <citation type="journal article" date="2004" name="Genome Res.">
        <title>The status, quality, and expansion of the NIH full-length cDNA project: the Mammalian Gene Collection (MGC).</title>
        <authorList>
            <consortium name="The MGC Project Team"/>
        </authorList>
    </citation>
    <scope>NUCLEOTIDE SEQUENCE [LARGE SCALE MRNA]</scope>
    <source>
        <tissue>Ovary</tissue>
    </source>
</reference>